<name>PANX_DROME</name>
<proteinExistence type="evidence at protein level"/>
<dbReference type="EMBL" id="AE013599">
    <property type="protein sequence ID" value="AAF46712.1"/>
    <property type="molecule type" value="Genomic_DNA"/>
</dbReference>
<dbReference type="EMBL" id="AY061239">
    <property type="protein sequence ID" value="AAL28787.1"/>
    <property type="molecule type" value="mRNA"/>
</dbReference>
<dbReference type="RefSeq" id="NP_611576.1">
    <property type="nucleotide sequence ID" value="NM_137732.4"/>
</dbReference>
<dbReference type="PDB" id="6IEW">
    <property type="method" value="X-ray"/>
    <property type="resolution" value="1.50 A"/>
    <property type="chains" value="A=315-341"/>
</dbReference>
<dbReference type="PDB" id="6OPF">
    <property type="method" value="X-ray"/>
    <property type="resolution" value="2.00 A"/>
    <property type="chains" value="A/B/D/F=311-340"/>
</dbReference>
<dbReference type="PDB" id="7K3J">
    <property type="method" value="X-ray"/>
    <property type="resolution" value="2.50 A"/>
    <property type="chains" value="B/D/F/H=455-480"/>
</dbReference>
<dbReference type="PDB" id="7K3K">
    <property type="method" value="X-ray"/>
    <property type="resolution" value="1.42 A"/>
    <property type="chains" value="B=455-467"/>
</dbReference>
<dbReference type="PDB" id="7K3L">
    <property type="method" value="X-ray"/>
    <property type="resolution" value="1.79 A"/>
    <property type="chains" value="B=468-480"/>
</dbReference>
<dbReference type="PDB" id="7MKK">
    <property type="method" value="X-ray"/>
    <property type="resolution" value="2.50 A"/>
    <property type="chains" value="C/D/F/H=83-109"/>
</dbReference>
<dbReference type="PDBsum" id="6IEW"/>
<dbReference type="PDBsum" id="6OPF"/>
<dbReference type="PDBsum" id="7K3J"/>
<dbReference type="PDBsum" id="7K3K"/>
<dbReference type="PDBsum" id="7K3L"/>
<dbReference type="PDBsum" id="7MKK"/>
<dbReference type="SMR" id="Q9W2H9"/>
<dbReference type="ComplexPortal" id="CPX-8934">
    <property type="entry name" value="Panoramix-induced co-transcriptional silencing complex"/>
</dbReference>
<dbReference type="FunCoup" id="Q9W2H9">
    <property type="interactions" value="197"/>
</dbReference>
<dbReference type="IntAct" id="Q9W2H9">
    <property type="interactions" value="13"/>
</dbReference>
<dbReference type="STRING" id="7227.FBpp0071541"/>
<dbReference type="PaxDb" id="7227-FBpp0071541"/>
<dbReference type="DNASU" id="37434"/>
<dbReference type="EnsemblMetazoa" id="FBtr0071615">
    <property type="protein sequence ID" value="FBpp0071541"/>
    <property type="gene ID" value="FBgn0034617"/>
</dbReference>
<dbReference type="GeneID" id="37434"/>
<dbReference type="KEGG" id="dme:Dmel_CG9754"/>
<dbReference type="UCSC" id="CG9754-RA">
    <property type="organism name" value="d. melanogaster"/>
</dbReference>
<dbReference type="AGR" id="FB:FBgn0034617"/>
<dbReference type="CTD" id="37434"/>
<dbReference type="FlyBase" id="FBgn0034617">
    <property type="gene designation" value="Panx"/>
</dbReference>
<dbReference type="VEuPathDB" id="VectorBase:FBgn0034617"/>
<dbReference type="eggNOG" id="ENOG502T937">
    <property type="taxonomic scope" value="Eukaryota"/>
</dbReference>
<dbReference type="HOGENOM" id="CLU_037558_0_0_1"/>
<dbReference type="InParanoid" id="Q9W2H9"/>
<dbReference type="OMA" id="SPICNNM"/>
<dbReference type="OrthoDB" id="7873147at2759"/>
<dbReference type="PhylomeDB" id="Q9W2H9"/>
<dbReference type="BioGRID-ORCS" id="37434">
    <property type="hits" value="0 hits in 1 CRISPR screen"/>
</dbReference>
<dbReference type="GenomeRNAi" id="37434"/>
<dbReference type="PRO" id="PR:Q9W2H9"/>
<dbReference type="Proteomes" id="UP000000803">
    <property type="component" value="Chromosome 2R"/>
</dbReference>
<dbReference type="Bgee" id="FBgn0034617">
    <property type="expression patterns" value="Expressed in nurse follicle cell (Drosophila) in ovary and 78 other cell types or tissues"/>
</dbReference>
<dbReference type="GO" id="GO:0005634">
    <property type="term" value="C:nucleus"/>
    <property type="evidence" value="ECO:0000314"/>
    <property type="project" value="UniProtKB"/>
</dbReference>
<dbReference type="GO" id="GO:0090571">
    <property type="term" value="C:RNA polymerase II transcription repressor complex"/>
    <property type="evidence" value="ECO:0000353"/>
    <property type="project" value="FlyBase"/>
</dbReference>
<dbReference type="GO" id="GO:0017053">
    <property type="term" value="C:transcription repressor complex"/>
    <property type="evidence" value="ECO:0000314"/>
    <property type="project" value="UniProtKB"/>
</dbReference>
<dbReference type="GO" id="GO:0034584">
    <property type="term" value="F:piRNA binding"/>
    <property type="evidence" value="ECO:0000314"/>
    <property type="project" value="FlyBase"/>
</dbReference>
<dbReference type="GO" id="GO:0003714">
    <property type="term" value="F:transcription corepressor activity"/>
    <property type="evidence" value="ECO:0000315"/>
    <property type="project" value="FlyBase"/>
</dbReference>
<dbReference type="GO" id="GO:0141005">
    <property type="term" value="P:transposable element silencing by heterochromatin formation"/>
    <property type="evidence" value="ECO:0000314"/>
    <property type="project" value="FlyBase"/>
</dbReference>
<dbReference type="GO" id="GO:0141006">
    <property type="term" value="P:transposable element silencing by piRNA-mediated heterochromatin formation"/>
    <property type="evidence" value="ECO:0000314"/>
    <property type="project" value="UniProtKB"/>
</dbReference>
<gene>
    <name evidence="14" type="primary">Panx</name>
    <name evidence="14" type="ORF">CG9754</name>
</gene>
<reference evidence="15" key="1">
    <citation type="journal article" date="2000" name="Science">
        <title>The genome sequence of Drosophila melanogaster.</title>
        <authorList>
            <person name="Adams M.D."/>
            <person name="Celniker S.E."/>
            <person name="Holt R.A."/>
            <person name="Evans C.A."/>
            <person name="Gocayne J.D."/>
            <person name="Amanatides P.G."/>
            <person name="Scherer S.E."/>
            <person name="Li P.W."/>
            <person name="Hoskins R.A."/>
            <person name="Galle R.F."/>
            <person name="George R.A."/>
            <person name="Lewis S.E."/>
            <person name="Richards S."/>
            <person name="Ashburner M."/>
            <person name="Henderson S.N."/>
            <person name="Sutton G.G."/>
            <person name="Wortman J.R."/>
            <person name="Yandell M.D."/>
            <person name="Zhang Q."/>
            <person name="Chen L.X."/>
            <person name="Brandon R.C."/>
            <person name="Rogers Y.-H.C."/>
            <person name="Blazej R.G."/>
            <person name="Champe M."/>
            <person name="Pfeiffer B.D."/>
            <person name="Wan K.H."/>
            <person name="Doyle C."/>
            <person name="Baxter E.G."/>
            <person name="Helt G."/>
            <person name="Nelson C.R."/>
            <person name="Miklos G.L.G."/>
            <person name="Abril J.F."/>
            <person name="Agbayani A."/>
            <person name="An H.-J."/>
            <person name="Andrews-Pfannkoch C."/>
            <person name="Baldwin D."/>
            <person name="Ballew R.M."/>
            <person name="Basu A."/>
            <person name="Baxendale J."/>
            <person name="Bayraktaroglu L."/>
            <person name="Beasley E.M."/>
            <person name="Beeson K.Y."/>
            <person name="Benos P.V."/>
            <person name="Berman B.P."/>
            <person name="Bhandari D."/>
            <person name="Bolshakov S."/>
            <person name="Borkova D."/>
            <person name="Botchan M.R."/>
            <person name="Bouck J."/>
            <person name="Brokstein P."/>
            <person name="Brottier P."/>
            <person name="Burtis K.C."/>
            <person name="Busam D.A."/>
            <person name="Butler H."/>
            <person name="Cadieu E."/>
            <person name="Center A."/>
            <person name="Chandra I."/>
            <person name="Cherry J.M."/>
            <person name="Cawley S."/>
            <person name="Dahlke C."/>
            <person name="Davenport L.B."/>
            <person name="Davies P."/>
            <person name="de Pablos B."/>
            <person name="Delcher A."/>
            <person name="Deng Z."/>
            <person name="Mays A.D."/>
            <person name="Dew I."/>
            <person name="Dietz S.M."/>
            <person name="Dodson K."/>
            <person name="Doup L.E."/>
            <person name="Downes M."/>
            <person name="Dugan-Rocha S."/>
            <person name="Dunkov B.C."/>
            <person name="Dunn P."/>
            <person name="Durbin K.J."/>
            <person name="Evangelista C.C."/>
            <person name="Ferraz C."/>
            <person name="Ferriera S."/>
            <person name="Fleischmann W."/>
            <person name="Fosler C."/>
            <person name="Gabrielian A.E."/>
            <person name="Garg N.S."/>
            <person name="Gelbart W.M."/>
            <person name="Glasser K."/>
            <person name="Glodek A."/>
            <person name="Gong F."/>
            <person name="Gorrell J.H."/>
            <person name="Gu Z."/>
            <person name="Guan P."/>
            <person name="Harris M."/>
            <person name="Harris N.L."/>
            <person name="Harvey D.A."/>
            <person name="Heiman T.J."/>
            <person name="Hernandez J.R."/>
            <person name="Houck J."/>
            <person name="Hostin D."/>
            <person name="Houston K.A."/>
            <person name="Howland T.J."/>
            <person name="Wei M.-H."/>
            <person name="Ibegwam C."/>
            <person name="Jalali M."/>
            <person name="Kalush F."/>
            <person name="Karpen G.H."/>
            <person name="Ke Z."/>
            <person name="Kennison J.A."/>
            <person name="Ketchum K.A."/>
            <person name="Kimmel B.E."/>
            <person name="Kodira C.D."/>
            <person name="Kraft C.L."/>
            <person name="Kravitz S."/>
            <person name="Kulp D."/>
            <person name="Lai Z."/>
            <person name="Lasko P."/>
            <person name="Lei Y."/>
            <person name="Levitsky A.A."/>
            <person name="Li J.H."/>
            <person name="Li Z."/>
            <person name="Liang Y."/>
            <person name="Lin X."/>
            <person name="Liu X."/>
            <person name="Mattei B."/>
            <person name="McIntosh T.C."/>
            <person name="McLeod M.P."/>
            <person name="McPherson D."/>
            <person name="Merkulov G."/>
            <person name="Milshina N.V."/>
            <person name="Mobarry C."/>
            <person name="Morris J."/>
            <person name="Moshrefi A."/>
            <person name="Mount S.M."/>
            <person name="Moy M."/>
            <person name="Murphy B."/>
            <person name="Murphy L."/>
            <person name="Muzny D.M."/>
            <person name="Nelson D.L."/>
            <person name="Nelson D.R."/>
            <person name="Nelson K.A."/>
            <person name="Nixon K."/>
            <person name="Nusskern D.R."/>
            <person name="Pacleb J.M."/>
            <person name="Palazzolo M."/>
            <person name="Pittman G.S."/>
            <person name="Pan S."/>
            <person name="Pollard J."/>
            <person name="Puri V."/>
            <person name="Reese M.G."/>
            <person name="Reinert K."/>
            <person name="Remington K."/>
            <person name="Saunders R.D.C."/>
            <person name="Scheeler F."/>
            <person name="Shen H."/>
            <person name="Shue B.C."/>
            <person name="Siden-Kiamos I."/>
            <person name="Simpson M."/>
            <person name="Skupski M.P."/>
            <person name="Smith T.J."/>
            <person name="Spier E."/>
            <person name="Spradling A.C."/>
            <person name="Stapleton M."/>
            <person name="Strong R."/>
            <person name="Sun E."/>
            <person name="Svirskas R."/>
            <person name="Tector C."/>
            <person name="Turner R."/>
            <person name="Venter E."/>
            <person name="Wang A.H."/>
            <person name="Wang X."/>
            <person name="Wang Z.-Y."/>
            <person name="Wassarman D.A."/>
            <person name="Weinstock G.M."/>
            <person name="Weissenbach J."/>
            <person name="Williams S.M."/>
            <person name="Woodage T."/>
            <person name="Worley K.C."/>
            <person name="Wu D."/>
            <person name="Yang S."/>
            <person name="Yao Q.A."/>
            <person name="Ye J."/>
            <person name="Yeh R.-F."/>
            <person name="Zaveri J.S."/>
            <person name="Zhan M."/>
            <person name="Zhang G."/>
            <person name="Zhao Q."/>
            <person name="Zheng L."/>
            <person name="Zheng X.H."/>
            <person name="Zhong F.N."/>
            <person name="Zhong W."/>
            <person name="Zhou X."/>
            <person name="Zhu S.C."/>
            <person name="Zhu X."/>
            <person name="Smith H.O."/>
            <person name="Gibbs R.A."/>
            <person name="Myers E.W."/>
            <person name="Rubin G.M."/>
            <person name="Venter J.C."/>
        </authorList>
    </citation>
    <scope>NUCLEOTIDE SEQUENCE [LARGE SCALE GENOMIC DNA]</scope>
    <source>
        <strain evidence="15">Berkeley</strain>
    </source>
</reference>
<reference evidence="15" key="2">
    <citation type="journal article" date="2002" name="Genome Biol.">
        <title>Annotation of the Drosophila melanogaster euchromatic genome: a systematic review.</title>
        <authorList>
            <person name="Misra S."/>
            <person name="Crosby M.A."/>
            <person name="Mungall C.J."/>
            <person name="Matthews B.B."/>
            <person name="Campbell K.S."/>
            <person name="Hradecky P."/>
            <person name="Huang Y."/>
            <person name="Kaminker J.S."/>
            <person name="Millburn G.H."/>
            <person name="Prochnik S.E."/>
            <person name="Smith C.D."/>
            <person name="Tupy J.L."/>
            <person name="Whitfield E.J."/>
            <person name="Bayraktaroglu L."/>
            <person name="Berman B.P."/>
            <person name="Bettencourt B.R."/>
            <person name="Celniker S.E."/>
            <person name="de Grey A.D.N.J."/>
            <person name="Drysdale R.A."/>
            <person name="Harris N.L."/>
            <person name="Richter J."/>
            <person name="Russo S."/>
            <person name="Schroeder A.J."/>
            <person name="Shu S.Q."/>
            <person name="Stapleton M."/>
            <person name="Yamada C."/>
            <person name="Ashburner M."/>
            <person name="Gelbart W.M."/>
            <person name="Rubin G.M."/>
            <person name="Lewis S.E."/>
        </authorList>
    </citation>
    <scope>GENOME REANNOTATION</scope>
    <source>
        <strain evidence="15">Berkeley</strain>
    </source>
</reference>
<reference evidence="13" key="3">
    <citation type="journal article" date="2002" name="Genome Biol.">
        <title>A Drosophila full-length cDNA resource.</title>
        <authorList>
            <person name="Stapleton M."/>
            <person name="Carlson J.W."/>
            <person name="Brokstein P."/>
            <person name="Yu C."/>
            <person name="Champe M."/>
            <person name="George R.A."/>
            <person name="Guarin H."/>
            <person name="Kronmiller B."/>
            <person name="Pacleb J.M."/>
            <person name="Park S."/>
            <person name="Wan K.H."/>
            <person name="Rubin G.M."/>
            <person name="Celniker S.E."/>
        </authorList>
    </citation>
    <scope>NUCLEOTIDE SEQUENCE [LARGE SCALE MRNA]</scope>
    <source>
        <strain evidence="13">Berkeley</strain>
        <tissue evidence="13">Embryo</tissue>
    </source>
</reference>
<reference evidence="12" key="4">
    <citation type="journal article" date="2013" name="Mol. Cell">
        <title>The genetic makeup of the Drosophila piRNA pathway.</title>
        <authorList>
            <person name="Handler D."/>
            <person name="Meixner K."/>
            <person name="Pizka M."/>
            <person name="Lauss K."/>
            <person name="Schmied C."/>
            <person name="Gruber F.S."/>
            <person name="Brennecke J."/>
        </authorList>
    </citation>
    <scope>SUBCELLULAR LOCATION</scope>
</reference>
<reference evidence="12" key="5">
    <citation type="journal article" date="2015" name="Science">
        <title>Panoramix enforces piRNA-dependent cotranscriptional silencing.</title>
        <authorList>
            <person name="Yu Y."/>
            <person name="Gu J."/>
            <person name="Jin Y."/>
            <person name="Luo Y."/>
            <person name="Preall J.B."/>
            <person name="Ma J."/>
            <person name="Czech B."/>
            <person name="Hannon G.J."/>
        </authorList>
    </citation>
    <scope>FUNCTION</scope>
    <scope>INTERACTION WITH PIWI</scope>
    <scope>TISSUE SPECIFICITY</scope>
    <scope>DISRUPTION PHENOTYPE</scope>
</reference>
<reference key="6">
    <citation type="journal article" date="2015" name="Genes Dev.">
        <title>Silencio/CG9754 connects the Piwi-piRNA complex to the cellular heterochromatin machinery.</title>
        <authorList>
            <person name="Sienski G."/>
            <person name="Batki J."/>
            <person name="Senti K.A."/>
            <person name="Doenertas D."/>
            <person name="Tirian L."/>
            <person name="Meixner K."/>
            <person name="Brennecke J."/>
        </authorList>
    </citation>
    <scope>FUNCTION</scope>
    <scope>INTERACTION WITH PIWI</scope>
    <scope>DISRUPTION PHENOTYPE</scope>
</reference>
<reference key="7">
    <citation type="journal article" date="2019" name="Elife">
        <title>piRNA-guided co-transcriptional silencing coopts nuclear export factors.</title>
        <authorList>
            <person name="Fabry M.H."/>
            <person name="Ciabrelli F."/>
            <person name="Munafo M."/>
            <person name="Eastwood E.L."/>
            <person name="Kneuss E."/>
            <person name="Falciatori I."/>
            <person name="Falconio F.A."/>
            <person name="Hannon G.J."/>
            <person name="Czech B."/>
        </authorList>
    </citation>
    <scope>IDENTIFICATION BY MASS SPECTROMETRY</scope>
    <scope>FUNCTION</scope>
    <scope>IDENTIFICATION IN A COMPLEX WITH NXF2 AND NXT1</scope>
    <scope>INTERACTION WITH NXF2</scope>
    <scope>SUBCELLULAR LOCATION</scope>
    <scope>TISSUE SPECIFICITY</scope>
    <scope>DOMAIN</scope>
    <scope>DISRUPTION PHENOTYPE</scope>
</reference>
<reference key="8">
    <citation type="journal article" date="2019" name="EMBO J.">
        <title>Nuclear RNA export factor variant initiates piRNA-guided co-transcriptional silencing.</title>
        <authorList>
            <person name="Murano K."/>
            <person name="Iwasaki Y.W."/>
            <person name="Ishizu H."/>
            <person name="Mashiko A."/>
            <person name="Shibuya A."/>
            <person name="Kondo S."/>
            <person name="Adachi S."/>
            <person name="Suzuki S."/>
            <person name="Saito K."/>
            <person name="Natsume T."/>
            <person name="Siomi M.C."/>
            <person name="Siomi H."/>
        </authorList>
    </citation>
    <scope>IDENTIFICATION BY MASS SPECTROMETRY</scope>
    <scope>FUNCTION</scope>
    <scope>IDENTIFICATION IN A COMPLEX WITH NXF2; PIWI AND NXT1</scope>
    <scope>INTERACTION WITH NXF2</scope>
    <scope>SUBCELLULAR LOCATION</scope>
    <scope>TISSUE SPECIFICITY</scope>
    <scope>DOMAIN</scope>
</reference>
<reference key="9">
    <citation type="journal article" date="2019" name="Nat. Cell Biol.">
        <title>A Pandas complex adapted for piRNA-guided transcriptional silencing and heterochromatin formation.</title>
        <authorList>
            <person name="Zhao K."/>
            <person name="Cheng S."/>
            <person name="Miao N."/>
            <person name="Xu P."/>
            <person name="Lu X."/>
            <person name="Zhang Y."/>
            <person name="Wang M."/>
            <person name="Ouyang X."/>
            <person name="Yuan X."/>
            <person name="Liu W."/>
            <person name="Lu X."/>
            <person name="Zhou P."/>
            <person name="Gu J."/>
            <person name="Zhang Y."/>
            <person name="Qiu D."/>
            <person name="Jin Z."/>
            <person name="Su C."/>
            <person name="Peng C."/>
            <person name="Wang J.H."/>
            <person name="Dong M.Q."/>
            <person name="Wan Y."/>
            <person name="Ma J."/>
            <person name="Cheng H."/>
            <person name="Huang Y."/>
            <person name="Yu Y."/>
        </authorList>
    </citation>
    <scope>IDENTIFICATION BY MASS SPECTROMETRY</scope>
    <scope>FUNCTION</scope>
    <scope>IDENTIFICATION IN A COMPLEX WITH NXF2 AND NXT1</scope>
    <scope>INTERACTION WITH NXF2</scope>
    <scope>TISSUE SPECIFICITY</scope>
    <scope>DISRUPTION PHENOTYPE</scope>
    <scope>REGION</scope>
</reference>
<reference evidence="16" key="10">
    <citation type="journal article" date="2019" name="Nat. Struct. Mol. Biol.">
        <title>The nascent RNA binding complex SFiNX licenses piRNA-guided heterochromatin formation.</title>
        <authorList>
            <person name="Batki J."/>
            <person name="Schnabl J."/>
            <person name="Wang J."/>
            <person name="Handler D."/>
            <person name="Andreev V.I."/>
            <person name="Stieger C.E."/>
            <person name="Novatchkova M."/>
            <person name="Lampersberger L."/>
            <person name="Kauneckaite K."/>
            <person name="Xie W."/>
            <person name="Mechtler K."/>
            <person name="Patel D.J."/>
            <person name="Brennecke J."/>
        </authorList>
    </citation>
    <scope>X-RAY CRYSTALLOGRAPHY (2.00 ANGSTROMS) OF 311-340 IN COMPLEX WITH NXF2</scope>
    <scope>IDENTIFICATION BY MASS SPECTROMETRY</scope>
    <scope>FUNCTION</scope>
    <scope>IDENTIFICATION IN A COMPLEX WITH NXF2; PIWI AND NXT1</scope>
    <scope>INTERACTION WITH NXF2</scope>
    <scope>SUBCELLULAR LOCATION</scope>
    <scope>MUTAGENESIS OF 328-ALA--ILE-335</scope>
    <scope>REGION</scope>
</reference>
<accession>Q9W2H9</accession>
<protein>
    <recommendedName>
        <fullName evidence="10">Protein panoramix</fullName>
    </recommendedName>
    <alternativeName>
        <fullName evidence="11">Protein silencio</fullName>
    </alternativeName>
</protein>
<sequence>MEAPMKLEVKVENYVECGINEDEATPLREGTGETPPHAFACGVPMSGSGWCSDPEDGNLVHHSATPTSDEHLQPSLDTIEPKMEPKIKEDADNAMLDSLLADPFENNSPATLQTPADVKPNAMLDSVEQGSRSCELLPSEFSKRENLDDMDLFSLKAAKTLVPDEQQSFPQNDTPIDDPEAADLIAQKREILKMLEMTAENRKVKHKKKKHKKERSHRSNKHQEESRKRNHSNSSSDEGADDKNQFDCDYRGHKKYKNRRGSASSQNESSKERKLRDTELDYVPVRPDEHFIRPIKFSNLIERRPPQVEFNTVNLSKADKRSLAVARAELVLEQIQQKANKEEPPEFHMVDTICKLPVNESFRNQDCFENPSPICNNMNVVYKFNSTPGTRIDLSKWGLETVPEATKRLLRLLGIDVARLKELQSTVKPSQRILKLKKEQLEQGLAPTEEQETATLYKNAATQTERRTATRDAGTQVRLESKLNGAFWQNPHFDPMNLTQHQSNVMLALQEIYQTLPSATMAVKLSRALAPALAIIKGRQP</sequence>
<evidence type="ECO:0000255" key="1"/>
<evidence type="ECO:0000256" key="2">
    <source>
        <dbReference type="SAM" id="MobiDB-lite"/>
    </source>
</evidence>
<evidence type="ECO:0000269" key="3">
    <source>
    </source>
</evidence>
<evidence type="ECO:0000269" key="4">
    <source>
    </source>
</evidence>
<evidence type="ECO:0000269" key="5">
    <source>
    </source>
</evidence>
<evidence type="ECO:0000269" key="6">
    <source>
    </source>
</evidence>
<evidence type="ECO:0000269" key="7">
    <source>
    </source>
</evidence>
<evidence type="ECO:0000269" key="8">
    <source>
    </source>
</evidence>
<evidence type="ECO:0000269" key="9">
    <source>
    </source>
</evidence>
<evidence type="ECO:0000303" key="10">
    <source>
    </source>
</evidence>
<evidence type="ECO:0000303" key="11">
    <source>
    </source>
</evidence>
<evidence type="ECO:0000305" key="12"/>
<evidence type="ECO:0000312" key="13">
    <source>
        <dbReference type="EMBL" id="AAL28787.1"/>
    </source>
</evidence>
<evidence type="ECO:0000312" key="14">
    <source>
        <dbReference type="FlyBase" id="FBgn0034617"/>
    </source>
</evidence>
<evidence type="ECO:0000312" key="15">
    <source>
        <dbReference type="Proteomes" id="UP000000803"/>
    </source>
</evidence>
<evidence type="ECO:0007744" key="16">
    <source>
        <dbReference type="PDB" id="6OPF"/>
    </source>
</evidence>
<evidence type="ECO:0007829" key="17">
    <source>
        <dbReference type="PDB" id="6IEW"/>
    </source>
</evidence>
<evidence type="ECO:0007829" key="18">
    <source>
        <dbReference type="PDB" id="7K3J"/>
    </source>
</evidence>
<evidence type="ECO:0007829" key="19">
    <source>
        <dbReference type="PDB" id="7K3K"/>
    </source>
</evidence>
<evidence type="ECO:0007829" key="20">
    <source>
        <dbReference type="PDB" id="7K3L"/>
    </source>
</evidence>
<evidence type="ECO:0007829" key="21">
    <source>
        <dbReference type="PDB" id="7MKK"/>
    </source>
</evidence>
<feature type="chain" id="PRO_0000435339" description="Protein panoramix">
    <location>
        <begin position="1"/>
        <end position="541"/>
    </location>
</feature>
<feature type="region of interest" description="Interaction with Piwi" evidence="7">
    <location>
        <begin position="1"/>
        <end position="169"/>
    </location>
</feature>
<feature type="region of interest" description="Disordered" evidence="2">
    <location>
        <begin position="52"/>
        <end position="75"/>
    </location>
</feature>
<feature type="region of interest" description="Disordered" evidence="2">
    <location>
        <begin position="198"/>
        <end position="281"/>
    </location>
</feature>
<feature type="region of interest" description="Nxf2-interacting region (NIR)" evidence="7 8 9">
    <location>
        <begin position="315"/>
        <end position="343"/>
    </location>
</feature>
<feature type="region of interest" description="Necessary for interaction with nxf2 and protein stability" evidence="8">
    <location>
        <begin position="387"/>
        <end position="446"/>
    </location>
</feature>
<feature type="coiled-coil region" evidence="1">
    <location>
        <begin position="194"/>
        <end position="216"/>
    </location>
</feature>
<feature type="coiled-coil region" evidence="1">
    <location>
        <begin position="323"/>
        <end position="343"/>
    </location>
</feature>
<feature type="compositionally biased region" description="Basic residues" evidence="2">
    <location>
        <begin position="203"/>
        <end position="220"/>
    </location>
</feature>
<feature type="compositionally biased region" description="Basic and acidic residues" evidence="2">
    <location>
        <begin position="241"/>
        <end position="251"/>
    </location>
</feature>
<feature type="compositionally biased region" description="Basic and acidic residues" evidence="2">
    <location>
        <begin position="269"/>
        <end position="279"/>
    </location>
</feature>
<feature type="mutagenesis site" description="Abolishes interaction with nxf2 and decreases protein stability." evidence="8">
    <original>AELVLEQI</original>
    <variation>DEVDDEQD</variation>
    <location>
        <begin position="328"/>
        <end position="335"/>
    </location>
</feature>
<feature type="helix" evidence="21">
    <location>
        <begin position="85"/>
        <end position="101"/>
    </location>
</feature>
<feature type="helix" evidence="17">
    <location>
        <begin position="317"/>
        <end position="340"/>
    </location>
</feature>
<feature type="strand" evidence="19">
    <location>
        <begin position="456"/>
        <end position="463"/>
    </location>
</feature>
<feature type="helix" evidence="18">
    <location>
        <begin position="467"/>
        <end position="469"/>
    </location>
</feature>
<feature type="strand" evidence="20">
    <location>
        <begin position="470"/>
        <end position="476"/>
    </location>
</feature>
<organism evidence="15">
    <name type="scientific">Drosophila melanogaster</name>
    <name type="common">Fruit fly</name>
    <dbReference type="NCBI Taxonomy" id="7227"/>
    <lineage>
        <taxon>Eukaryota</taxon>
        <taxon>Metazoa</taxon>
        <taxon>Ecdysozoa</taxon>
        <taxon>Arthropoda</taxon>
        <taxon>Hexapoda</taxon>
        <taxon>Insecta</taxon>
        <taxon>Pterygota</taxon>
        <taxon>Neoptera</taxon>
        <taxon>Endopterygota</taxon>
        <taxon>Diptera</taxon>
        <taxon>Brachycera</taxon>
        <taxon>Muscomorpha</taxon>
        <taxon>Ephydroidea</taxon>
        <taxon>Drosophilidae</taxon>
        <taxon>Drosophila</taxon>
        <taxon>Sophophora</taxon>
    </lineage>
</organism>
<keyword id="KW-0002">3D-structure</keyword>
<keyword id="KW-0175">Coiled coil</keyword>
<keyword id="KW-0539">Nucleus</keyword>
<keyword id="KW-1185">Reference proteome</keyword>
<keyword id="KW-0694">RNA-binding</keyword>
<keyword id="KW-0943">RNA-mediated gene silencing</keyword>
<comment type="function">
    <text evidence="4 5 6 7 8 9">Acts via the piwi-interacting RNA (piRNA) pathway which mediates the repression of transposable elements during meiosis by forming complexes composed of piRNAs and piwi proteins and governs the methylation and subsequent repression of transposons (PubMed:26472911, PubMed:26494711). Required for transcriptional silencing of transposons targeted by piwi and confers its effects by interacting with nascent RNA transcripts (PubMed:26472911, PubMed:26494711). Likely to be recruited to nascent transcripts cotranscriptionally by piwi and to recruit additional factors involved in transcriptional silencing (PubMed:26472911). In the ovaries, forms a complex with nxf2, piwi and Nxt1 which acts as effectors of cotranscriptional transposon silencing (PubMed:31219034, PubMed:31368590, PubMed:31384064, PubMed:31570835). The interaction with nxf2 stabilizes the nuclear protein complex (PubMed:31384064).</text>
</comment>
<comment type="subunit">
    <text evidence="4 5 6 7 8 9">In the ovaries, part of a complex composed of at least Panx, nxf2, piwi and Nxt1 (PubMed:26472911, PubMed:26494711, PubMed:31219034, PubMed:31368590, PubMed:31384064, PubMed:31570835). The complex is knowns as Panx-induced cotranscriptional silencing (PICTS) complex, Panx-nxf2-dependent TAP/p15 silencing (Pandas complex), SFiNX (silencing factor interacting nuclear export variant) or piwi-Panx-nxf2-p15 (PPNP) complex (PubMed:26472911, PubMed:26494711, PubMed:31219034, PubMed:31368590, PubMed:31384064, PubMed:31570835). Interacts (via NIR region) with nxf2 (via TAP-C domain); the interaction is direct (PubMed:31219034, PubMed:31368590, PubMed:31384064, PubMed:31570835).</text>
</comment>
<comment type="interaction">
    <interactant intactId="EBI-184428">
        <id>Q9W2H9</id>
    </interactant>
    <interactant intactId="EBI-3406276">
        <id>Q9VKM1</id>
        <label>piwi</label>
    </interactant>
    <organismsDiffer>false</organismsDiffer>
    <experiments>2</experiments>
</comment>
<comment type="subcellular location">
    <subcellularLocation>
        <location evidence="3 6 7 8">Nucleus</location>
    </subcellularLocation>
    <text evidence="6">Nuclear localization depends on interaction with nxf2.</text>
</comment>
<comment type="tissue specificity">
    <text evidence="4 6 7 9">Expressed in female gonads (at protein level).</text>
</comment>
<comment type="domain">
    <text evidence="6 7">N-terminal region is necessary and sufficient to enforce silencing of an artificial reporter gene.</text>
</comment>
<comment type="disruption phenotype">
    <text evidence="4 5 6 9">Mutants are viable but show oogenesis defects (PubMed:26494711). They also display up-regulation of transposable elements with loss of transposon H3K9 methylation and sterility in female flies (PubMed:26472911, PubMed:26494711). No effect on the abundance or content of piRNA populations or on the nuclear localization of piwi (PubMed:26472911, PubMed:26494711). RNAi-mediated knockdown in the germline increases transposon expression and impairs nuclear localization of nxf2 in nurse cells by reducing its stability (PubMed:31219034, PubMed:31570835).</text>
</comment>
<comment type="miscellaneous">
    <text evidence="10">The name 'panoramix' derives from the mentor who empowers the French comic book character Asterix to perform his feats of strength.</text>
</comment>